<comment type="function">
    <text evidence="4 9">Regulator of the DNA damage response (DDR). Part of the TTT complex that is required to stabilize protein levels of the phosphatidylinositol 3-kinase-related protein kinase (PIKK) family proteins. The TTT complex is involved in the cellular resistance to DNA damage stresses, like ionizing radiation (IR), ultraviolet (UV) and mitomycin C (MMC). Together with the TTT complex and HSP90 may participate in the proper folding of newly synthesized PIKKs. Promotes assembly, stabilizes and maintains the activity of mTORC1 and mTORC2 complexes, which regulate cell growth and survival in response to nutrient and hormonal signals. May be involved in telomere length regulation.</text>
</comment>
<comment type="subunit">
    <text evidence="7 8 9 10 12 13">Component of the TTT complex composed of TELO2, TTI1 and TTI2. Interacts with ATM, ATR, MTOR, PRKDC, RUVBL2, TTI1, TTI2, SMG1 and TRRAP. Component of the mTORC1 and mTORC2 complexes. Interacts (phosphorylated form) with PIH1D1 which mediates interaction of TELO2 with the R2TP complex composed of RUVBL1, RUVBL2, PIH1D1, and RPAP3 (PubMed:20864032, PubMed:24656813).</text>
</comment>
<comment type="interaction">
    <interactant intactId="EBI-1043674">
        <id>Q9Y4R8</id>
    </interactant>
    <interactant intactId="EBI-495465">
        <id>Q13315</id>
        <label>ATM</label>
    </interactant>
    <organismsDiffer>false</organismsDiffer>
    <experiments>4</experiments>
</comment>
<comment type="interaction">
    <interactant intactId="EBI-1043674">
        <id>Q9Y4R8</id>
    </interactant>
    <interactant intactId="EBI-946046">
        <id>P54252</id>
        <label>ATXN3</label>
    </interactant>
    <organismsDiffer>false</organismsDiffer>
    <experiments>3</experiments>
</comment>
<comment type="interaction">
    <interactant intactId="EBI-1043674">
        <id>Q9Y4R8</id>
    </interactant>
    <interactant intactId="EBI-2869927">
        <id>Q9UK97</id>
        <label>FBXO9</label>
    </interactant>
    <organismsDiffer>false</organismsDiffer>
    <experiments>5</experiments>
</comment>
<comment type="interaction">
    <interactant intactId="EBI-1043674">
        <id>Q9Y4R8</id>
    </interactant>
    <interactant intactId="EBI-357318">
        <id>Q9NWS0</id>
        <label>PIH1D1</label>
    </interactant>
    <organismsDiffer>false</organismsDiffer>
    <experiments>14</experiments>
</comment>
<comment type="interaction">
    <interactant intactId="EBI-1043674">
        <id>Q9Y4R8</id>
    </interactant>
    <interactant intactId="EBI-1055680">
        <id>O43156</id>
        <label>TTI1</label>
    </interactant>
    <organismsDiffer>false</organismsDiffer>
    <experiments>7</experiments>
</comment>
<comment type="subcellular location">
    <subcellularLocation>
        <location>Cytoplasm</location>
    </subcellularLocation>
    <subcellularLocation>
        <location>Membrane</location>
    </subcellularLocation>
    <subcellularLocation>
        <location>Nucleus</location>
    </subcellularLocation>
    <subcellularLocation>
        <location evidence="16">Chromosome</location>
        <location evidence="16">Telomere</location>
    </subcellularLocation>
</comment>
<comment type="PTM">
    <text evidence="11">Hydroxylation by PHD3 is required for a proper interaction with ATR, and activation of the ATR/CHK1/p53 pathway following DNA damage.</text>
</comment>
<comment type="PTM">
    <text evidence="12">Phosphorylated at Ser-485 by CK2 following growth factor deprivation, leading to its subsequent ubiquitination by the SCF(FBXO9) complex. Phosphorylation by CK2 only takes place when TELO2 is bound to mTORC1, not mTORC2; leading to selective ubiquitination of mTORC1-associated protein.</text>
</comment>
<comment type="PTM">
    <text evidence="12">Ubiquitinated by the SCF(FBXO9) complex following phosphorylation by CK2 in response to growth factor deprivation, leading to its degradation by the proteasome. Only mTORC1-associated protein is ubiquitinated and degraded, leading to selective inactivation of mTORC1 to restrain cell growth and protein translation, while mTORC2 is activated due to the relief of feedback inhibition by mTORC1.</text>
</comment>
<comment type="disease" evidence="14">
    <disease id="DI-04744">
        <name>You-Hoover-Fong syndrome</name>
        <acronym>YHFS</acronym>
        <description>A syndrome characterized by severe global developmental delay, intellectual disability, dysmorphic facial features, microcephaly, abnormal movements, congenital heart disease comprising developmental abnormalities of the great vessels, and abnormal auditory and visual function. The transmission pattern is consistent with autosomal recessive inheritance.</description>
        <dbReference type="MIM" id="616954"/>
    </disease>
    <text>The disease is caused by variants affecting the gene represented in this entry.</text>
</comment>
<comment type="miscellaneous">
    <text>Cells overexpressing TELO2 are hypersensitive to hydroxyurea (HU) and undergo apoptotic death in response to treatment with HU.</text>
</comment>
<comment type="similarity">
    <text evidence="16">Belongs to the TEL2 family.</text>
</comment>
<comment type="sequence caution" evidence="16">
    <conflict type="erroneous initiation">
        <sequence resource="EMBL-CDS" id="BAA31658"/>
    </conflict>
    <text>Extended N-terminus.</text>
</comment>
<gene>
    <name type="primary">TELO2</name>
    <name type="synonym">KIAA0683</name>
</gene>
<reference key="1">
    <citation type="journal article" date="1998" name="DNA Res.">
        <title>Prediction of the coding sequences of unidentified human genes. X. The complete sequences of 100 new cDNA clones from brain which can code for large proteins in vitro.</title>
        <authorList>
            <person name="Ishikawa K."/>
            <person name="Nagase T."/>
            <person name="Suyama M."/>
            <person name="Miyajima N."/>
            <person name="Tanaka A."/>
            <person name="Kotani H."/>
            <person name="Nomura N."/>
            <person name="Ohara O."/>
        </authorList>
    </citation>
    <scope>NUCLEOTIDE SEQUENCE [LARGE SCALE MRNA]</scope>
    <source>
        <tissue>Brain</tissue>
    </source>
</reference>
<reference key="2">
    <citation type="journal article" date="2001" name="Genome Res.">
        <title>Towards a catalog of human genes and proteins: sequencing and analysis of 500 novel complete protein coding human cDNAs.</title>
        <authorList>
            <person name="Wiemann S."/>
            <person name="Weil B."/>
            <person name="Wellenreuther R."/>
            <person name="Gassenhuber J."/>
            <person name="Glassl S."/>
            <person name="Ansorge W."/>
            <person name="Boecher M."/>
            <person name="Bloecker H."/>
            <person name="Bauersachs S."/>
            <person name="Blum H."/>
            <person name="Lauber J."/>
            <person name="Duesterhoeft A."/>
            <person name="Beyer A."/>
            <person name="Koehrer K."/>
            <person name="Strack N."/>
            <person name="Mewes H.-W."/>
            <person name="Ottenwaelder B."/>
            <person name="Obermaier B."/>
            <person name="Tampe J."/>
            <person name="Heubner D."/>
            <person name="Wambutt R."/>
            <person name="Korn B."/>
            <person name="Klein M."/>
            <person name="Poustka A."/>
        </authorList>
    </citation>
    <scope>NUCLEOTIDE SEQUENCE [LARGE SCALE MRNA]</scope>
    <scope>VARIANT ARG-146</scope>
    <source>
        <tissue>Testis</tissue>
    </source>
</reference>
<reference key="3">
    <citation type="journal article" date="2007" name="BMC Genomics">
        <title>The full-ORF clone resource of the German cDNA consortium.</title>
        <authorList>
            <person name="Bechtel S."/>
            <person name="Rosenfelder H."/>
            <person name="Duda A."/>
            <person name="Schmidt C.P."/>
            <person name="Ernst U."/>
            <person name="Wellenreuther R."/>
            <person name="Mehrle A."/>
            <person name="Schuster C."/>
            <person name="Bahr A."/>
            <person name="Bloecker H."/>
            <person name="Heubner D."/>
            <person name="Hoerlein A."/>
            <person name="Michel G."/>
            <person name="Wedler H."/>
            <person name="Koehrer K."/>
            <person name="Ottenwaelder B."/>
            <person name="Poustka A."/>
            <person name="Wiemann S."/>
            <person name="Schupp I."/>
        </authorList>
    </citation>
    <scope>NUCLEOTIDE SEQUENCE [LARGE SCALE MRNA]</scope>
    <scope>VARIANT ARG-146</scope>
    <source>
        <tissue>Testis</tissue>
    </source>
</reference>
<reference key="4">
    <citation type="journal article" date="2001" name="Hum. Mol. Genet.">
        <title>Sequence, structure and pathology of the fully annotated terminal 2 Mb of the short arm of human chromosome 16.</title>
        <authorList>
            <person name="Daniels R.J."/>
            <person name="Peden J.F."/>
            <person name="Lloyd C."/>
            <person name="Horsley S.W."/>
            <person name="Clark K."/>
            <person name="Tufarelli C."/>
            <person name="Kearney L."/>
            <person name="Buckle V.J."/>
            <person name="Doggett N.A."/>
            <person name="Flint J."/>
            <person name="Higgs D.R."/>
        </authorList>
    </citation>
    <scope>NUCLEOTIDE SEQUENCE [LARGE SCALE GENOMIC DNA]</scope>
</reference>
<reference key="5">
    <citation type="journal article" date="2004" name="Nature">
        <title>The sequence and analysis of duplication-rich human chromosome 16.</title>
        <authorList>
            <person name="Martin J."/>
            <person name="Han C."/>
            <person name="Gordon L.A."/>
            <person name="Terry A."/>
            <person name="Prabhakar S."/>
            <person name="She X."/>
            <person name="Xie G."/>
            <person name="Hellsten U."/>
            <person name="Chan Y.M."/>
            <person name="Altherr M."/>
            <person name="Couronne O."/>
            <person name="Aerts A."/>
            <person name="Bajorek E."/>
            <person name="Black S."/>
            <person name="Blumer H."/>
            <person name="Branscomb E."/>
            <person name="Brown N.C."/>
            <person name="Bruno W.J."/>
            <person name="Buckingham J.M."/>
            <person name="Callen D.F."/>
            <person name="Campbell C.S."/>
            <person name="Campbell M.L."/>
            <person name="Campbell E.W."/>
            <person name="Caoile C."/>
            <person name="Challacombe J.F."/>
            <person name="Chasteen L.A."/>
            <person name="Chertkov O."/>
            <person name="Chi H.C."/>
            <person name="Christensen M."/>
            <person name="Clark L.M."/>
            <person name="Cohn J.D."/>
            <person name="Denys M."/>
            <person name="Detter J.C."/>
            <person name="Dickson M."/>
            <person name="Dimitrijevic-Bussod M."/>
            <person name="Escobar J."/>
            <person name="Fawcett J.J."/>
            <person name="Flowers D."/>
            <person name="Fotopulos D."/>
            <person name="Glavina T."/>
            <person name="Gomez M."/>
            <person name="Gonzales E."/>
            <person name="Goodstein D."/>
            <person name="Goodwin L.A."/>
            <person name="Grady D.L."/>
            <person name="Grigoriev I."/>
            <person name="Groza M."/>
            <person name="Hammon N."/>
            <person name="Hawkins T."/>
            <person name="Haydu L."/>
            <person name="Hildebrand C.E."/>
            <person name="Huang W."/>
            <person name="Israni S."/>
            <person name="Jett J."/>
            <person name="Jewett P.B."/>
            <person name="Kadner K."/>
            <person name="Kimball H."/>
            <person name="Kobayashi A."/>
            <person name="Krawczyk M.-C."/>
            <person name="Leyba T."/>
            <person name="Longmire J.L."/>
            <person name="Lopez F."/>
            <person name="Lou Y."/>
            <person name="Lowry S."/>
            <person name="Ludeman T."/>
            <person name="Manohar C.F."/>
            <person name="Mark G.A."/>
            <person name="McMurray K.L."/>
            <person name="Meincke L.J."/>
            <person name="Morgan J."/>
            <person name="Moyzis R.K."/>
            <person name="Mundt M.O."/>
            <person name="Munk A.C."/>
            <person name="Nandkeshwar R.D."/>
            <person name="Pitluck S."/>
            <person name="Pollard M."/>
            <person name="Predki P."/>
            <person name="Parson-Quintana B."/>
            <person name="Ramirez L."/>
            <person name="Rash S."/>
            <person name="Retterer J."/>
            <person name="Ricke D.O."/>
            <person name="Robinson D.L."/>
            <person name="Rodriguez A."/>
            <person name="Salamov A."/>
            <person name="Saunders E.H."/>
            <person name="Scott D."/>
            <person name="Shough T."/>
            <person name="Stallings R.L."/>
            <person name="Stalvey M."/>
            <person name="Sutherland R.D."/>
            <person name="Tapia R."/>
            <person name="Tesmer J.G."/>
            <person name="Thayer N."/>
            <person name="Thompson L.S."/>
            <person name="Tice H."/>
            <person name="Torney D.C."/>
            <person name="Tran-Gyamfi M."/>
            <person name="Tsai M."/>
            <person name="Ulanovsky L.E."/>
            <person name="Ustaszewska A."/>
            <person name="Vo N."/>
            <person name="White P.S."/>
            <person name="Williams A.L."/>
            <person name="Wills P.L."/>
            <person name="Wu J.-R."/>
            <person name="Wu K."/>
            <person name="Yang J."/>
            <person name="DeJong P."/>
            <person name="Bruce D."/>
            <person name="Doggett N.A."/>
            <person name="Deaven L."/>
            <person name="Schmutz J."/>
            <person name="Grimwood J."/>
            <person name="Richardson P."/>
            <person name="Rokhsar D.S."/>
            <person name="Eichler E.E."/>
            <person name="Gilna P."/>
            <person name="Lucas S.M."/>
            <person name="Myers R.M."/>
            <person name="Rubin E.M."/>
            <person name="Pennacchio L.A."/>
        </authorList>
    </citation>
    <scope>NUCLEOTIDE SEQUENCE [LARGE SCALE GENOMIC DNA]</scope>
</reference>
<reference key="6">
    <citation type="submission" date="2005-09" db="EMBL/GenBank/DDBJ databases">
        <authorList>
            <person name="Mural R.J."/>
            <person name="Istrail S."/>
            <person name="Sutton G.G."/>
            <person name="Florea L."/>
            <person name="Halpern A.L."/>
            <person name="Mobarry C.M."/>
            <person name="Lippert R."/>
            <person name="Walenz B."/>
            <person name="Shatkay H."/>
            <person name="Dew I."/>
            <person name="Miller J.R."/>
            <person name="Flanigan M.J."/>
            <person name="Edwards N.J."/>
            <person name="Bolanos R."/>
            <person name="Fasulo D."/>
            <person name="Halldorsson B.V."/>
            <person name="Hannenhalli S."/>
            <person name="Turner R."/>
            <person name="Yooseph S."/>
            <person name="Lu F."/>
            <person name="Nusskern D.R."/>
            <person name="Shue B.C."/>
            <person name="Zheng X.H."/>
            <person name="Zhong F."/>
            <person name="Delcher A.L."/>
            <person name="Huson D.H."/>
            <person name="Kravitz S.A."/>
            <person name="Mouchard L."/>
            <person name="Reinert K."/>
            <person name="Remington K.A."/>
            <person name="Clark A.G."/>
            <person name="Waterman M.S."/>
            <person name="Eichler E.E."/>
            <person name="Adams M.D."/>
            <person name="Hunkapiller M.W."/>
            <person name="Myers E.W."/>
            <person name="Venter J.C."/>
        </authorList>
    </citation>
    <scope>NUCLEOTIDE SEQUENCE [LARGE SCALE GENOMIC DNA]</scope>
    <scope>VARIANT ARG-146</scope>
</reference>
<reference key="7">
    <citation type="journal article" date="2004" name="Genome Res.">
        <title>The status, quality, and expansion of the NIH full-length cDNA project: the Mammalian Gene Collection (MGC).</title>
        <authorList>
            <consortium name="The MGC Project Team"/>
        </authorList>
    </citation>
    <scope>NUCLEOTIDE SEQUENCE [LARGE SCALE MRNA]</scope>
    <scope>VARIANT ARG-146</scope>
    <source>
        <tissue>Placenta</tissue>
    </source>
</reference>
<reference key="8">
    <citation type="journal article" date="2003" name="J. Biol. Chem.">
        <title>Human CLK2 links cell cycle progression, apoptosis, and telomere length regulation.</title>
        <authorList>
            <person name="Jiang N."/>
            <person name="Benard C.Y."/>
            <person name="Kebir H."/>
            <person name="Shoubridge E.A."/>
            <person name="Hekimi S."/>
        </authorList>
    </citation>
    <scope>FUNCTION</scope>
    <scope>SUBCELLULAR LOCATION</scope>
</reference>
<reference key="9">
    <citation type="journal article" date="2008" name="Mol. Cell">
        <title>Kinase-selective enrichment enables quantitative phosphoproteomics of the kinome across the cell cycle.</title>
        <authorList>
            <person name="Daub H."/>
            <person name="Olsen J.V."/>
            <person name="Bairlein M."/>
            <person name="Gnad F."/>
            <person name="Oppermann F.S."/>
            <person name="Korner R."/>
            <person name="Greff Z."/>
            <person name="Keri G."/>
            <person name="Stemmann O."/>
            <person name="Mann M."/>
        </authorList>
    </citation>
    <scope>IDENTIFICATION BY MASS SPECTROMETRY [LARGE SCALE ANALYSIS]</scope>
    <source>
        <tissue>Cervix carcinoma</tissue>
    </source>
</reference>
<reference key="10">
    <citation type="journal article" date="2009" name="Anal. Chem.">
        <title>Lys-N and trypsin cover complementary parts of the phosphoproteome in a refined SCX-based approach.</title>
        <authorList>
            <person name="Gauci S."/>
            <person name="Helbig A.O."/>
            <person name="Slijper M."/>
            <person name="Krijgsveld J."/>
            <person name="Heck A.J."/>
            <person name="Mohammed S."/>
        </authorList>
    </citation>
    <scope>IDENTIFICATION BY MASS SPECTROMETRY [LARGE SCALE ANALYSIS]</scope>
</reference>
<reference key="11">
    <citation type="journal article" date="2010" name="Genes Dev.">
        <title>A genetic screen identifies the Triple T complex required for DNA damage signaling and ATM and ATR stability.</title>
        <authorList>
            <person name="Hurov K.E."/>
            <person name="Cotta-Ramusino C."/>
            <person name="Elledge S.J."/>
        </authorList>
    </citation>
    <scope>FUNCTION</scope>
    <scope>INTERACTION WITH TTI1 AND TTI2</scope>
</reference>
<reference key="12">
    <citation type="journal article" date="2010" name="Genes Dev.">
        <title>Tel2 structure and function in the Hsp90-dependent maturation of mTOR and ATR complexes.</title>
        <authorList>
            <person name="Takai H."/>
            <person name="Xie Y."/>
            <person name="de Lange T."/>
            <person name="Pavletich N.P."/>
        </authorList>
    </citation>
    <scope>INTERACTION WITH ATM; ATR; MTOR; PRKDC; RUVBL2; TTI1 AND TTI2</scope>
</reference>
<reference key="13">
    <citation type="journal article" date="2010" name="J. Biol. Chem.">
        <title>Tti1 and Tel2 are critical factors in mammalian target of rapamycin complex assembly.</title>
        <authorList>
            <person name="Kaizuka T."/>
            <person name="Hara T."/>
            <person name="Oshiro N."/>
            <person name="Kikkawa U."/>
            <person name="Yonezawa K."/>
            <person name="Takehana K."/>
            <person name="Iemura S."/>
            <person name="Natsume T."/>
            <person name="Mizushima N."/>
        </authorList>
    </citation>
    <scope>INTERACTION WITH TTI1; MTOR; ATM; ATR; PRKDC; SMG1 AND TRRAP</scope>
</reference>
<reference key="14">
    <citation type="journal article" date="2010" name="Mol. Cell">
        <title>CK2 phospho-dependent binding of R2TP complex to TEL2 is essential for mTOR and SMG1 stability.</title>
        <authorList>
            <person name="Horejsi Z."/>
            <person name="Takai H."/>
            <person name="Adelman C.A."/>
            <person name="Collis S.J."/>
            <person name="Flynn H."/>
            <person name="Maslen S."/>
            <person name="Skehel J.M."/>
            <person name="de Lange T."/>
            <person name="Boulton S.J."/>
        </authorList>
    </citation>
    <scope>INTERACTION WITH PIH1D1</scope>
</reference>
<reference key="15">
    <citation type="journal article" date="2010" name="Sci. Signal.">
        <title>Quantitative phosphoproteomics reveals widespread full phosphorylation site occupancy during mitosis.</title>
        <authorList>
            <person name="Olsen J.V."/>
            <person name="Vermeulen M."/>
            <person name="Santamaria A."/>
            <person name="Kumar C."/>
            <person name="Miller M.L."/>
            <person name="Jensen L.J."/>
            <person name="Gnad F."/>
            <person name="Cox J."/>
            <person name="Jensen T.S."/>
            <person name="Nigg E.A."/>
            <person name="Brunak S."/>
            <person name="Mann M."/>
        </authorList>
    </citation>
    <scope>PHOSPHORYLATION [LARGE SCALE ANALYSIS] AT SER-688</scope>
    <scope>IDENTIFICATION BY MASS SPECTROMETRY [LARGE SCALE ANALYSIS]</scope>
    <source>
        <tissue>Cervix carcinoma</tissue>
    </source>
</reference>
<reference key="16">
    <citation type="journal article" date="2011" name="BMC Syst. Biol.">
        <title>Initial characterization of the human central proteome.</title>
        <authorList>
            <person name="Burkard T.R."/>
            <person name="Planyavsky M."/>
            <person name="Kaupe I."/>
            <person name="Breitwieser F.P."/>
            <person name="Buerckstuemmer T."/>
            <person name="Bennett K.L."/>
            <person name="Superti-Furga G."/>
            <person name="Colinge J."/>
        </authorList>
    </citation>
    <scope>IDENTIFICATION BY MASS SPECTROMETRY [LARGE SCALE ANALYSIS]</scope>
</reference>
<reference key="17">
    <citation type="journal article" date="2011" name="Sci. Signal.">
        <title>System-wide temporal characterization of the proteome and phosphoproteome of human embryonic stem cell differentiation.</title>
        <authorList>
            <person name="Rigbolt K.T."/>
            <person name="Prokhorova T.A."/>
            <person name="Akimov V."/>
            <person name="Henningsen J."/>
            <person name="Johansen P.T."/>
            <person name="Kratchmarova I."/>
            <person name="Kassem M."/>
            <person name="Mann M."/>
            <person name="Olsen J.V."/>
            <person name="Blagoev B."/>
        </authorList>
    </citation>
    <scope>PHOSPHORYLATION [LARGE SCALE ANALYSIS] AT SER-836</scope>
    <scope>IDENTIFICATION BY MASS SPECTROMETRY [LARGE SCALE ANALYSIS]</scope>
</reference>
<reference key="18">
    <citation type="journal article" date="2012" name="J. Clin. Invest.">
        <title>PHD3-dependent hydroxylation of HCLK2 promotes the DNA damage response.</title>
        <authorList>
            <person name="Xie L."/>
            <person name="Pi X."/>
            <person name="Mishra A."/>
            <person name="Fong G."/>
            <person name="Peng J."/>
            <person name="Patterson C."/>
        </authorList>
    </citation>
    <scope>HYDROXYLATION AT PRO-374; PRO-419 AND PRO-422 BY PHD3</scope>
</reference>
<reference key="19">
    <citation type="journal article" date="2012" name="Proc. Natl. Acad. Sci. U.S.A.">
        <title>N-terminal acetylome analyses and functional insights of the N-terminal acetyltransferase NatB.</title>
        <authorList>
            <person name="Van Damme P."/>
            <person name="Lasa M."/>
            <person name="Polevoda B."/>
            <person name="Gazquez C."/>
            <person name="Elosegui-Artola A."/>
            <person name="Kim D.S."/>
            <person name="De Juan-Pardo E."/>
            <person name="Demeyer K."/>
            <person name="Hole K."/>
            <person name="Larrea E."/>
            <person name="Timmerman E."/>
            <person name="Prieto J."/>
            <person name="Arnesen T."/>
            <person name="Sherman F."/>
            <person name="Gevaert K."/>
            <person name="Aldabe R."/>
        </authorList>
    </citation>
    <scope>ACETYLATION [LARGE SCALE ANALYSIS] AT MET-1</scope>
    <scope>IDENTIFICATION BY MASS SPECTROMETRY [LARGE SCALE ANALYSIS]</scope>
</reference>
<reference key="20">
    <citation type="journal article" date="2013" name="J. Proteome Res.">
        <title>Toward a comprehensive characterization of a human cancer cell phosphoproteome.</title>
        <authorList>
            <person name="Zhou H."/>
            <person name="Di Palma S."/>
            <person name="Preisinger C."/>
            <person name="Peng M."/>
            <person name="Polat A.N."/>
            <person name="Heck A.J."/>
            <person name="Mohammed S."/>
        </authorList>
    </citation>
    <scope>PHOSPHORYLATION [LARGE SCALE ANALYSIS] AT SER-836</scope>
    <scope>IDENTIFICATION BY MASS SPECTROMETRY [LARGE SCALE ANALYSIS]</scope>
    <source>
        <tissue>Erythroleukemia</tissue>
    </source>
</reference>
<reference key="21">
    <citation type="journal article" date="2013" name="Nat. Cell Biol.">
        <title>SCF(Fbxo9) and CK2 direct the cellular response to growth factor withdrawal via Tel2/Tti1 degradation and promote survival in multiple myeloma.</title>
        <authorList>
            <person name="Fernandez-Saiz V."/>
            <person name="Targosz B.S."/>
            <person name="Lemeer S."/>
            <person name="Eichner R."/>
            <person name="Langer C."/>
            <person name="Bullinger L."/>
            <person name="Reiter C."/>
            <person name="Slotta-Huspenina J."/>
            <person name="Schroeder S."/>
            <person name="Knorn A.M."/>
            <person name="Kurutz J."/>
            <person name="Peschel C."/>
            <person name="Pagano M."/>
            <person name="Kuster B."/>
            <person name="Bassermann F."/>
        </authorList>
    </citation>
    <scope>IDENTIFICATION IN THE MTORC1 COMPLEX</scope>
    <scope>IDENTIFICATION IN THE MTORC2 COMPLEX</scope>
    <scope>SUBCELLULAR LOCATION</scope>
    <scope>PHOSPHORYLATION AT SER-485; SER-487 AND SER-491</scope>
    <scope>UBIQUITINATION</scope>
    <scope>MUTAGENESIS OF SER-485</scope>
</reference>
<reference key="22">
    <citation type="journal article" date="2016" name="Am. J. Hum. Genet.">
        <title>A syndromic intellectual disability disorder caused by variants in TELO2, a gene encoding a component of the TTT complex.</title>
        <authorList>
            <person name="You J."/>
            <person name="Sobreira N.L."/>
            <person name="Gable D.L."/>
            <person name="Jurgens J."/>
            <person name="Grange D.K."/>
            <person name="Belnap N."/>
            <person name="Siniard A."/>
            <person name="Szelinger S."/>
            <person name="Schrauwen I."/>
            <person name="Richholt R.F."/>
            <person name="Vallee S.E."/>
            <person name="Dinulos M.B."/>
            <person name="Valle D."/>
            <person name="Armanios M."/>
            <person name="Hoover-Fong J."/>
        </authorList>
    </citation>
    <scope>INVOLVEMENT IN YHFS</scope>
    <scope>VARIANTS YHFS LEU-260; PHE-367; HIS-609; VAL-720 AND MET-766</scope>
    <scope>CHARACTERIZATION OF VARIANTS YHFS PHE-367; VAL-720 AND MET-766</scope>
</reference>
<reference key="23">
    <citation type="journal article" date="2014" name="Cell Rep.">
        <title>Phosphorylation-dependent PIH1D1 interactions define substrate specificity of the R2TP cochaperone complex.</title>
        <authorList>
            <person name="Horejsi Z."/>
            <person name="Stach L."/>
            <person name="Flower T.G."/>
            <person name="Joshi D."/>
            <person name="Flynn H."/>
            <person name="Skehel J.M."/>
            <person name="O'Reilly N.J."/>
            <person name="Ogrodowicz R.W."/>
            <person name="Smerdon S.J."/>
            <person name="Boulton S.J."/>
        </authorList>
    </citation>
    <scope>X-RAY CRYSTALLOGRAPHY (2.45 ANGSTROMS) OF 489-498 IN COMPLEX WITH PIH1D1</scope>
    <scope>INTERACTION WITH PIH1D1</scope>
</reference>
<evidence type="ECO:0000250" key="1">
    <source>
        <dbReference type="UniProtKB" id="Q9DC40"/>
    </source>
</evidence>
<evidence type="ECO:0000256" key="2">
    <source>
        <dbReference type="SAM" id="MobiDB-lite"/>
    </source>
</evidence>
<evidence type="ECO:0000269" key="3">
    <source>
    </source>
</evidence>
<evidence type="ECO:0000269" key="4">
    <source>
    </source>
</evidence>
<evidence type="ECO:0000269" key="5">
    <source>
    </source>
</evidence>
<evidence type="ECO:0000269" key="6">
    <source>
    </source>
</evidence>
<evidence type="ECO:0000269" key="7">
    <source>
    </source>
</evidence>
<evidence type="ECO:0000269" key="8">
    <source>
    </source>
</evidence>
<evidence type="ECO:0000269" key="9">
    <source>
    </source>
</evidence>
<evidence type="ECO:0000269" key="10">
    <source>
    </source>
</evidence>
<evidence type="ECO:0000269" key="11">
    <source>
    </source>
</evidence>
<evidence type="ECO:0000269" key="12">
    <source>
    </source>
</evidence>
<evidence type="ECO:0000269" key="13">
    <source>
    </source>
</evidence>
<evidence type="ECO:0000269" key="14">
    <source>
    </source>
</evidence>
<evidence type="ECO:0000269" key="15">
    <source ref="6"/>
</evidence>
<evidence type="ECO:0000305" key="16"/>
<evidence type="ECO:0007744" key="17">
    <source>
    </source>
</evidence>
<evidence type="ECO:0007744" key="18">
    <source>
    </source>
</evidence>
<evidence type="ECO:0007744" key="19">
    <source>
    </source>
</evidence>
<evidence type="ECO:0007744" key="20">
    <source>
    </source>
</evidence>
<evidence type="ECO:0007829" key="21">
    <source>
        <dbReference type="PDB" id="7OLE"/>
    </source>
</evidence>
<proteinExistence type="evidence at protein level"/>
<keyword id="KW-0002">3D-structure</keyword>
<keyword id="KW-0007">Acetylation</keyword>
<keyword id="KW-0158">Chromosome</keyword>
<keyword id="KW-0963">Cytoplasm</keyword>
<keyword id="KW-0225">Disease variant</keyword>
<keyword id="KW-0379">Hydroxylation</keyword>
<keyword id="KW-0991">Intellectual disability</keyword>
<keyword id="KW-0472">Membrane</keyword>
<keyword id="KW-0539">Nucleus</keyword>
<keyword id="KW-0597">Phosphoprotein</keyword>
<keyword id="KW-1267">Proteomics identification</keyword>
<keyword id="KW-1185">Reference proteome</keyword>
<keyword id="KW-0779">Telomere</keyword>
<keyword id="KW-0832">Ubl conjugation</keyword>
<sequence>MEPAPSEVRLAVREAIHALSSSEDGGHIFCTLESLKRYLGEMEPPALPREKEEFASAHFSPVLRCLASRLSPAWLELLPHGRLEELWASFFLEGPADQAFLVLMETIEGAAGPSFRLMKMARLLARFLREGRLAVLMEAQCRQQTQPGFILLRETLLGKVVALPDHLGNRLQQENLAEFFPQNYFRLLGEEVVRVLQAVVDSLQGGLDSSVSFVSQVLGKACVHGRQQEILGVLVPRLAALTQGSYLHQRVCWRLVEQVPDRAMEAVLTGLVEAALGPEVLSRLLGNLVVKNKKAQFVMTQKLLFLQSRLTTPMLQSLLGHLAMDSQRRPLLLQVLKELLETWGSSSAIRHTPLPQQRHVSKAVLICLAQLGEPELRDSRDELLASMMAGVKCRLDSSLPPVRRLGMIVAEVVSARIHPEGPPLKFQYEEDELSLELLALASPQPAGDGASEAGTSLVPATAEPPAETPAEIVDGGVPQAQLAGSDSDLDSDDEFVPYDMSGDRELKSSKAPAYVRDCVEALTTSEDIERWEAALRALEGLVYRSPTATREVSVELAKVLLHLEEKTCVVGFAGLRQRALVAVTVTDPAPVADYLTSQFYALNYSLRQRMDILDVLTLAAQELSRPGCLGRTPQPGSPSPNTPCLPEAAVSQPGSAVASDWRVVVEERIRSKTQRLSKGGPRQGPAGSPSRFNSVAGHFFFPLLQRFDRPLVTFDLLGEDQLVLGRLAHTLGALMCLAVNTTVAVAMGKALLEFVWALRFHIDAYVRQGLLSAVSSVLLSLPAARLLEDLMDELLEARSWLADVAEKDPDEDCRTLALRALLLLQRLKNRLLPPASP</sequence>
<dbReference type="EMBL" id="AB014583">
    <property type="protein sequence ID" value="BAA31658.3"/>
    <property type="status" value="ALT_INIT"/>
    <property type="molecule type" value="mRNA"/>
</dbReference>
<dbReference type="EMBL" id="AL080126">
    <property type="protein sequence ID" value="CAB45724.1"/>
    <property type="molecule type" value="mRNA"/>
</dbReference>
<dbReference type="EMBL" id="AL137394">
    <property type="protein sequence ID" value="CAB70722.1"/>
    <property type="molecule type" value="mRNA"/>
</dbReference>
<dbReference type="EMBL" id="AE006467">
    <property type="protein sequence ID" value="AAK61284.1"/>
    <property type="molecule type" value="Genomic_DNA"/>
</dbReference>
<dbReference type="EMBL" id="AL031705">
    <property type="status" value="NOT_ANNOTATED_CDS"/>
    <property type="molecule type" value="Genomic_DNA"/>
</dbReference>
<dbReference type="EMBL" id="CH471112">
    <property type="protein sequence ID" value="EAW85647.1"/>
    <property type="molecule type" value="Genomic_DNA"/>
</dbReference>
<dbReference type="EMBL" id="CH471112">
    <property type="protein sequence ID" value="EAW85649.1"/>
    <property type="molecule type" value="Genomic_DNA"/>
</dbReference>
<dbReference type="EMBL" id="CH471112">
    <property type="protein sequence ID" value="EAW85650.1"/>
    <property type="molecule type" value="Genomic_DNA"/>
</dbReference>
<dbReference type="EMBL" id="BC017188">
    <property type="protein sequence ID" value="AAH17188.1"/>
    <property type="molecule type" value="mRNA"/>
</dbReference>
<dbReference type="CCDS" id="CCDS32363.1"/>
<dbReference type="PIR" id="T12514">
    <property type="entry name" value="T12514"/>
</dbReference>
<dbReference type="RefSeq" id="NP_001338775.1">
    <property type="nucleotide sequence ID" value="NM_001351846.2"/>
</dbReference>
<dbReference type="RefSeq" id="NP_057195.2">
    <property type="nucleotide sequence ID" value="NM_016111.4"/>
</dbReference>
<dbReference type="RefSeq" id="XP_016879403.1">
    <property type="nucleotide sequence ID" value="XM_017023914.1"/>
</dbReference>
<dbReference type="RefSeq" id="XP_047290943.1">
    <property type="nucleotide sequence ID" value="XM_047434987.1"/>
</dbReference>
<dbReference type="RefSeq" id="XP_047290944.1">
    <property type="nucleotide sequence ID" value="XM_047434988.1"/>
</dbReference>
<dbReference type="PDB" id="4PSI">
    <property type="method" value="X-ray"/>
    <property type="resolution" value="2.45 A"/>
    <property type="chains" value="D/E=489-498"/>
</dbReference>
<dbReference type="PDB" id="7F4U">
    <property type="method" value="EM"/>
    <property type="resolution" value="4.20 A"/>
    <property type="chains" value="A=1-837"/>
</dbReference>
<dbReference type="PDB" id="7OLE">
    <property type="method" value="EM"/>
    <property type="resolution" value="3.41 A"/>
    <property type="chains" value="K=1-455"/>
</dbReference>
<dbReference type="PDBsum" id="4PSI"/>
<dbReference type="PDBsum" id="7F4U"/>
<dbReference type="PDBsum" id="7OLE"/>
<dbReference type="EMDB" id="EMD-12979"/>
<dbReference type="EMDB" id="EMD-31454"/>
<dbReference type="SMR" id="Q9Y4R8"/>
<dbReference type="BioGRID" id="115223">
    <property type="interactions" value="171"/>
</dbReference>
<dbReference type="ComplexPortal" id="CPX-6148">
    <property type="entry name" value="TTT complex"/>
</dbReference>
<dbReference type="CORUM" id="Q9Y4R8"/>
<dbReference type="DIP" id="DIP-40568N"/>
<dbReference type="FunCoup" id="Q9Y4R8">
    <property type="interactions" value="2127"/>
</dbReference>
<dbReference type="IntAct" id="Q9Y4R8">
    <property type="interactions" value="101"/>
</dbReference>
<dbReference type="MINT" id="Q9Y4R8"/>
<dbReference type="STRING" id="9606.ENSP00000262319"/>
<dbReference type="GlyGen" id="Q9Y4R8">
    <property type="glycosylation" value="1 site, 1 O-linked glycan (1 site)"/>
</dbReference>
<dbReference type="iPTMnet" id="Q9Y4R8"/>
<dbReference type="PhosphoSitePlus" id="Q9Y4R8"/>
<dbReference type="SwissPalm" id="Q9Y4R8"/>
<dbReference type="BioMuta" id="TELO2"/>
<dbReference type="DMDM" id="166987394"/>
<dbReference type="jPOST" id="Q9Y4R8"/>
<dbReference type="MassIVE" id="Q9Y4R8"/>
<dbReference type="PaxDb" id="9606-ENSP00000262319"/>
<dbReference type="PeptideAtlas" id="Q9Y4R8"/>
<dbReference type="ProteomicsDB" id="86248"/>
<dbReference type="Pumba" id="Q9Y4R8"/>
<dbReference type="Antibodypedia" id="23134">
    <property type="antibodies" value="124 antibodies from 22 providers"/>
</dbReference>
<dbReference type="DNASU" id="9894"/>
<dbReference type="Ensembl" id="ENST00000262319.11">
    <property type="protein sequence ID" value="ENSP00000262319.6"/>
    <property type="gene ID" value="ENSG00000100726.15"/>
</dbReference>
<dbReference type="GeneID" id="9894"/>
<dbReference type="KEGG" id="hsa:9894"/>
<dbReference type="MANE-Select" id="ENST00000262319.11">
    <property type="protein sequence ID" value="ENSP00000262319.6"/>
    <property type="RefSeq nucleotide sequence ID" value="NM_016111.4"/>
    <property type="RefSeq protein sequence ID" value="NP_057195.2"/>
</dbReference>
<dbReference type="UCSC" id="uc002cly.4">
    <property type="organism name" value="human"/>
</dbReference>
<dbReference type="AGR" id="HGNC:29099"/>
<dbReference type="CTD" id="9894"/>
<dbReference type="DisGeNET" id="9894"/>
<dbReference type="GeneCards" id="TELO2"/>
<dbReference type="HGNC" id="HGNC:29099">
    <property type="gene designation" value="TELO2"/>
</dbReference>
<dbReference type="HPA" id="ENSG00000100726">
    <property type="expression patterns" value="Low tissue specificity"/>
</dbReference>
<dbReference type="MalaCards" id="TELO2"/>
<dbReference type="MIM" id="611140">
    <property type="type" value="gene"/>
</dbReference>
<dbReference type="MIM" id="616954">
    <property type="type" value="phenotype"/>
</dbReference>
<dbReference type="neXtProt" id="NX_Q9Y4R8"/>
<dbReference type="OpenTargets" id="ENSG00000100726"/>
<dbReference type="Orphanet" id="488642">
    <property type="disease" value="TELO2-related intellectual disability-neurodevelopmental disorder"/>
</dbReference>
<dbReference type="PharmGKB" id="PA162405604"/>
<dbReference type="VEuPathDB" id="HostDB:ENSG00000100726"/>
<dbReference type="eggNOG" id="KOG4346">
    <property type="taxonomic scope" value="Eukaryota"/>
</dbReference>
<dbReference type="GeneTree" id="ENSGT00390000006698"/>
<dbReference type="HOGENOM" id="CLU_008764_1_0_1"/>
<dbReference type="InParanoid" id="Q9Y4R8"/>
<dbReference type="OMA" id="FYPQNYF"/>
<dbReference type="OrthoDB" id="10258062at2759"/>
<dbReference type="PAN-GO" id="Q9Y4R8">
    <property type="GO annotations" value="6 GO annotations based on evolutionary models"/>
</dbReference>
<dbReference type="PhylomeDB" id="Q9Y4R8"/>
<dbReference type="TreeFam" id="TF313925"/>
<dbReference type="PathwayCommons" id="Q9Y4R8"/>
<dbReference type="SignaLink" id="Q9Y4R8"/>
<dbReference type="SIGNOR" id="Q9Y4R8"/>
<dbReference type="BioGRID-ORCS" id="9894">
    <property type="hits" value="606 hits in 1165 CRISPR screens"/>
</dbReference>
<dbReference type="ChiTaRS" id="TELO2">
    <property type="organism name" value="human"/>
</dbReference>
<dbReference type="EvolutionaryTrace" id="Q9Y4R8"/>
<dbReference type="GeneWiki" id="TELO2"/>
<dbReference type="GenomeRNAi" id="9894"/>
<dbReference type="Pharos" id="Q9Y4R8">
    <property type="development level" value="Tbio"/>
</dbReference>
<dbReference type="PRO" id="PR:Q9Y4R8"/>
<dbReference type="Proteomes" id="UP000005640">
    <property type="component" value="Chromosome 16"/>
</dbReference>
<dbReference type="RNAct" id="Q9Y4R8">
    <property type="molecule type" value="protein"/>
</dbReference>
<dbReference type="Bgee" id="ENSG00000100726">
    <property type="expression patterns" value="Expressed in right uterine tube and 155 other cell types or tissues"/>
</dbReference>
<dbReference type="ExpressionAtlas" id="Q9Y4R8">
    <property type="expression patterns" value="baseline and differential"/>
</dbReference>
<dbReference type="GO" id="GO:0000781">
    <property type="term" value="C:chromosome, telomeric region"/>
    <property type="evidence" value="ECO:0007669"/>
    <property type="project" value="UniProtKB-SubCell"/>
</dbReference>
<dbReference type="GO" id="GO:0005737">
    <property type="term" value="C:cytoplasm"/>
    <property type="evidence" value="ECO:0000314"/>
    <property type="project" value="UniProtKB"/>
</dbReference>
<dbReference type="GO" id="GO:0005829">
    <property type="term" value="C:cytosol"/>
    <property type="evidence" value="ECO:0000314"/>
    <property type="project" value="HPA"/>
</dbReference>
<dbReference type="GO" id="GO:0016020">
    <property type="term" value="C:membrane"/>
    <property type="evidence" value="ECO:0007669"/>
    <property type="project" value="UniProtKB-SubCell"/>
</dbReference>
<dbReference type="GO" id="GO:0016604">
    <property type="term" value="C:nuclear body"/>
    <property type="evidence" value="ECO:0000314"/>
    <property type="project" value="HPA"/>
</dbReference>
<dbReference type="GO" id="GO:0005634">
    <property type="term" value="C:nucleus"/>
    <property type="evidence" value="ECO:0000314"/>
    <property type="project" value="UniProtKB"/>
</dbReference>
<dbReference type="GO" id="GO:0110078">
    <property type="term" value="C:TTT Hsp90 cochaperone complex"/>
    <property type="evidence" value="ECO:0000353"/>
    <property type="project" value="ComplexPortal"/>
</dbReference>
<dbReference type="GO" id="GO:0051879">
    <property type="term" value="F:Hsp90 protein binding"/>
    <property type="evidence" value="ECO:0000353"/>
    <property type="project" value="UniProtKB"/>
</dbReference>
<dbReference type="GO" id="GO:0060090">
    <property type="term" value="F:molecular adaptor activity"/>
    <property type="evidence" value="ECO:0007669"/>
    <property type="project" value="Ensembl"/>
</dbReference>
<dbReference type="GO" id="GO:0019901">
    <property type="term" value="F:protein kinase binding"/>
    <property type="evidence" value="ECO:0000353"/>
    <property type="project" value="UniProtKB"/>
</dbReference>
<dbReference type="GO" id="GO:0044877">
    <property type="term" value="F:protein-containing complex binding"/>
    <property type="evidence" value="ECO:0000314"/>
    <property type="project" value="MGI"/>
</dbReference>
<dbReference type="GO" id="GO:0042162">
    <property type="term" value="F:telomeric DNA binding"/>
    <property type="evidence" value="ECO:0000318"/>
    <property type="project" value="GO_Central"/>
</dbReference>
<dbReference type="GO" id="GO:0051083">
    <property type="term" value="P:'de novo' cotranslational protein folding"/>
    <property type="evidence" value="ECO:0000318"/>
    <property type="project" value="GO_Central"/>
</dbReference>
<dbReference type="GO" id="GO:2000003">
    <property type="term" value="P:positive regulation of DNA damage checkpoint"/>
    <property type="evidence" value="ECO:0000303"/>
    <property type="project" value="ComplexPortal"/>
</dbReference>
<dbReference type="GO" id="GO:0050821">
    <property type="term" value="P:protein stabilization"/>
    <property type="evidence" value="ECO:0000315"/>
    <property type="project" value="UniProtKB"/>
</dbReference>
<dbReference type="FunFam" id="1.25.40.720:FF:000001">
    <property type="entry name" value="Telomere length regulation protein TEL2"/>
    <property type="match status" value="1"/>
</dbReference>
<dbReference type="FunFam" id="1.25.40.720:FF:000003">
    <property type="entry name" value="Telomere length regulation protein TEL2 homolog"/>
    <property type="match status" value="1"/>
</dbReference>
<dbReference type="Gene3D" id="1.25.40.720">
    <property type="entry name" value="Telomere length regulation protein 2, C-terminal domain"/>
    <property type="match status" value="2"/>
</dbReference>
<dbReference type="InterPro" id="IPR016024">
    <property type="entry name" value="ARM-type_fold"/>
</dbReference>
<dbReference type="InterPro" id="IPR038528">
    <property type="entry name" value="TEL2_C_sf"/>
</dbReference>
<dbReference type="InterPro" id="IPR051970">
    <property type="entry name" value="TEL2_Regulation"/>
</dbReference>
<dbReference type="InterPro" id="IPR019337">
    <property type="entry name" value="Telomere_length_regulation_dom"/>
</dbReference>
<dbReference type="PANTHER" id="PTHR15830">
    <property type="entry name" value="TELOMERE LENGTH REGULATION PROTEIN TEL2 FAMILY MEMBER"/>
    <property type="match status" value="1"/>
</dbReference>
<dbReference type="PANTHER" id="PTHR15830:SF10">
    <property type="entry name" value="TELOMERE LENGTH REGULATION PROTEIN TEL2 HOMOLOG"/>
    <property type="match status" value="1"/>
</dbReference>
<dbReference type="Pfam" id="PF25320">
    <property type="entry name" value="TELO2_ARM"/>
    <property type="match status" value="1"/>
</dbReference>
<dbReference type="Pfam" id="PF10193">
    <property type="entry name" value="Telomere_reg-2"/>
    <property type="match status" value="1"/>
</dbReference>
<dbReference type="SUPFAM" id="SSF48371">
    <property type="entry name" value="ARM repeat"/>
    <property type="match status" value="1"/>
</dbReference>
<protein>
    <recommendedName>
        <fullName>Telomere length regulation protein TEL2 homolog</fullName>
    </recommendedName>
    <alternativeName>
        <fullName>Protein clk-2 homolog</fullName>
        <shortName>hCLK2</shortName>
    </alternativeName>
</protein>
<feature type="chain" id="PRO_0000318515" description="Telomere length regulation protein TEL2 homolog">
    <location>
        <begin position="1"/>
        <end position="837"/>
    </location>
</feature>
<feature type="region of interest" description="Disordered" evidence="2">
    <location>
        <begin position="444"/>
        <end position="472"/>
    </location>
</feature>
<feature type="region of interest" description="Disordered" evidence="2">
    <location>
        <begin position="627"/>
        <end position="651"/>
    </location>
</feature>
<feature type="compositionally biased region" description="Low complexity" evidence="2">
    <location>
        <begin position="459"/>
        <end position="471"/>
    </location>
</feature>
<feature type="site" description="Interaction with PIH1D1" evidence="1">
    <location>
        <position position="490"/>
    </location>
</feature>
<feature type="site" description="Interaction with PIH1D1" evidence="1">
    <location>
        <position position="491"/>
    </location>
</feature>
<feature type="site" description="Interaction with PIH1D1" evidence="1">
    <location>
        <position position="492"/>
    </location>
</feature>
<feature type="modified residue" description="N-acetylmethionine" evidence="19">
    <location>
        <position position="1"/>
    </location>
</feature>
<feature type="modified residue" description="Hydroxyproline" evidence="11">
    <location>
        <position position="374"/>
    </location>
</feature>
<feature type="modified residue" description="Hydroxyproline" evidence="11">
    <location>
        <position position="419"/>
    </location>
</feature>
<feature type="modified residue" description="Hydroxyproline" evidence="11">
    <location>
        <position position="422"/>
    </location>
</feature>
<feature type="modified residue" description="Phosphoserine" evidence="1">
    <location>
        <position position="456"/>
    </location>
</feature>
<feature type="modified residue" description="Phosphoserine; by CK2" evidence="12">
    <location>
        <position position="485"/>
    </location>
</feature>
<feature type="modified residue" description="Phosphoserine" evidence="12">
    <location>
        <position position="487"/>
    </location>
</feature>
<feature type="modified residue" description="Phosphoserine" evidence="12">
    <location>
        <position position="491"/>
    </location>
</feature>
<feature type="modified residue" description="Phosphoserine" evidence="17">
    <location>
        <position position="688"/>
    </location>
</feature>
<feature type="modified residue" description="Phosphoserine" evidence="18 20">
    <location>
        <position position="836"/>
    </location>
</feature>
<feature type="sequence variant" id="VAR_038752" description="In dbSNP:rs2667661.">
    <original>E</original>
    <variation>G</variation>
    <location>
        <position position="7"/>
    </location>
</feature>
<feature type="sequence variant" id="VAR_061839" description="In dbSNP:rs2667660.">
    <original>E</original>
    <variation>Q</variation>
    <location>
        <position position="7"/>
    </location>
</feature>
<feature type="sequence variant" id="VAR_038753" description="In dbSNP:rs2235624." evidence="3 5 6 15">
    <original>Q</original>
    <variation>R</variation>
    <location>
        <position position="146"/>
    </location>
</feature>
<feature type="sequence variant" id="VAR_077025" description="In YHFS; dbSNP:rs369656775." evidence="14">
    <original>P</original>
    <variation>L</variation>
    <location>
        <position position="260"/>
    </location>
</feature>
<feature type="sequence variant" id="VAR_077026" description="In YHFS; dbSNP:rs202020308." evidence="14">
    <original>C</original>
    <variation>F</variation>
    <location>
        <position position="367"/>
    </location>
</feature>
<feature type="sequence variant" id="VAR_061840" description="In dbSNP:rs58099766.">
    <original>A</original>
    <variation>V</variation>
    <location>
        <position position="511"/>
    </location>
</feature>
<feature type="sequence variant" id="VAR_077027" description="In YHFS; dbSNP:rs754162070." evidence="14">
    <original>R</original>
    <variation>H</variation>
    <location>
        <position position="609"/>
    </location>
</feature>
<feature type="sequence variant" id="VAR_038754" description="In dbSNP:rs2248128.">
    <original>Q</original>
    <variation>R</variation>
    <location>
        <position position="674"/>
    </location>
</feature>
<feature type="sequence variant" id="VAR_077028" description="In YHFS; dbSNP:rs878853271." evidence="14">
    <original>D</original>
    <variation>V</variation>
    <location>
        <position position="720"/>
    </location>
</feature>
<feature type="sequence variant" id="VAR_077029" description="In YHFS; dbSNP:rs371675497." evidence="14">
    <original>V</original>
    <variation>M</variation>
    <location>
        <position position="766"/>
    </location>
</feature>
<feature type="mutagenesis site" description="Abolishes phosphorylation by CK2 in response to growth factor deprivation and subsequent ubiquitination and degradation." evidence="12">
    <original>S</original>
    <variation>A</variation>
    <location>
        <position position="485"/>
    </location>
</feature>
<feature type="sequence conflict" description="In Ref. 1; BAA31658." evidence="16" ref="1">
    <original>E</original>
    <variation>R</variation>
    <location>
        <position position="7"/>
    </location>
</feature>
<feature type="helix" evidence="21">
    <location>
        <begin position="12"/>
        <end position="21"/>
    </location>
</feature>
<feature type="helix" evidence="21">
    <location>
        <begin position="25"/>
        <end position="37"/>
    </location>
</feature>
<feature type="helix" evidence="21">
    <location>
        <begin position="60"/>
        <end position="68"/>
    </location>
</feature>
<feature type="helix" evidence="21">
    <location>
        <begin position="70"/>
        <end position="77"/>
    </location>
</feature>
<feature type="helix" evidence="21">
    <location>
        <begin position="95"/>
        <end position="105"/>
    </location>
</feature>
<feature type="helix" evidence="21">
    <location>
        <begin position="111"/>
        <end position="122"/>
    </location>
</feature>
<feature type="helix" evidence="21">
    <location>
        <begin position="126"/>
        <end position="156"/>
    </location>
</feature>
<feature type="helix" evidence="21">
    <location>
        <begin position="168"/>
        <end position="173"/>
    </location>
</feature>
<feature type="helix" evidence="21">
    <location>
        <begin position="181"/>
        <end position="200"/>
    </location>
</feature>
<feature type="strand" evidence="21">
    <location>
        <begin position="201"/>
        <end position="204"/>
    </location>
</feature>
<feature type="helix" evidence="21">
    <location>
        <begin position="209"/>
        <end position="224"/>
    </location>
</feature>
<feature type="helix" evidence="21">
    <location>
        <begin position="227"/>
        <end position="243"/>
    </location>
</feature>
<feature type="helix" evidence="21">
    <location>
        <begin position="247"/>
        <end position="255"/>
    </location>
</feature>
<feature type="helix" evidence="21">
    <location>
        <begin position="260"/>
        <end position="274"/>
    </location>
</feature>
<feature type="helix" evidence="21">
    <location>
        <begin position="276"/>
        <end position="287"/>
    </location>
</feature>
<feature type="helix" evidence="21">
    <location>
        <begin position="294"/>
        <end position="305"/>
    </location>
</feature>
<feature type="helix" evidence="21">
    <location>
        <begin position="311"/>
        <end position="327"/>
    </location>
</feature>
<feature type="helix" evidence="21">
    <location>
        <begin position="331"/>
        <end position="343"/>
    </location>
</feature>
<feature type="helix" evidence="21">
    <location>
        <begin position="347"/>
        <end position="350"/>
    </location>
</feature>
<feature type="helix" evidence="21">
    <location>
        <begin position="355"/>
        <end position="369"/>
    </location>
</feature>
<feature type="helix" evidence="21">
    <location>
        <begin position="375"/>
        <end position="395"/>
    </location>
</feature>
<feature type="helix" evidence="21">
    <location>
        <begin position="400"/>
        <end position="413"/>
    </location>
</feature>
<organism>
    <name type="scientific">Homo sapiens</name>
    <name type="common">Human</name>
    <dbReference type="NCBI Taxonomy" id="9606"/>
    <lineage>
        <taxon>Eukaryota</taxon>
        <taxon>Metazoa</taxon>
        <taxon>Chordata</taxon>
        <taxon>Craniata</taxon>
        <taxon>Vertebrata</taxon>
        <taxon>Euteleostomi</taxon>
        <taxon>Mammalia</taxon>
        <taxon>Eutheria</taxon>
        <taxon>Euarchontoglires</taxon>
        <taxon>Primates</taxon>
        <taxon>Haplorrhini</taxon>
        <taxon>Catarrhini</taxon>
        <taxon>Hominidae</taxon>
        <taxon>Homo</taxon>
    </lineage>
</organism>
<name>TELO2_HUMAN</name>
<accession>Q9Y4R8</accession>
<accession>D3DU73</accession>
<accession>O75168</accession>
<accession>Q7LDV4</accession>
<accession>Q9BR21</accession>